<feature type="chain" id="PRO_0000254484" description="ATP synthase subunit beta, chloroplastic">
    <location>
        <begin position="1"/>
        <end position="498"/>
    </location>
</feature>
<feature type="binding site" evidence="1">
    <location>
        <begin position="172"/>
        <end position="179"/>
    </location>
    <ligand>
        <name>ATP</name>
        <dbReference type="ChEBI" id="CHEBI:30616"/>
    </ligand>
</feature>
<comment type="function">
    <text evidence="1">Produces ATP from ADP in the presence of a proton gradient across the membrane. The catalytic sites are hosted primarily by the beta subunits.</text>
</comment>
<comment type="catalytic activity">
    <reaction evidence="1">
        <text>ATP + H2O + 4 H(+)(in) = ADP + phosphate + 5 H(+)(out)</text>
        <dbReference type="Rhea" id="RHEA:57720"/>
        <dbReference type="ChEBI" id="CHEBI:15377"/>
        <dbReference type="ChEBI" id="CHEBI:15378"/>
        <dbReference type="ChEBI" id="CHEBI:30616"/>
        <dbReference type="ChEBI" id="CHEBI:43474"/>
        <dbReference type="ChEBI" id="CHEBI:456216"/>
        <dbReference type="EC" id="7.1.2.2"/>
    </reaction>
</comment>
<comment type="subunit">
    <text evidence="1">F-type ATPases have 2 components, CF(1) - the catalytic core - and CF(0) - the membrane proton channel. CF(1) has five subunits: alpha(3), beta(3), gamma(1), delta(1), epsilon(1). CF(0) has four main subunits: a(1), b(1), b'(1) and c(9-12).</text>
</comment>
<comment type="subcellular location">
    <subcellularLocation>
        <location evidence="1">Plastid</location>
        <location evidence="1">Chloroplast thylakoid membrane</location>
        <topology evidence="1">Peripheral membrane protein</topology>
    </subcellularLocation>
</comment>
<comment type="similarity">
    <text evidence="1">Belongs to the ATPase alpha/beta chains family.</text>
</comment>
<name>ATPB_HYPCO</name>
<sequence length="498" mass="53786">MRTNPTTSSPVVSTLEEKNLGRIAQIIGPVLDVVFPPGKMPNIYNALVVKGRDTVGQQINVTCEVQQLLGNNRVRAVAMSATDGLMRGMEVIDTGAPLSVPVGGATLGRIFNVLGEPVDNLGPVDTRTTSPIHRSAPAFIQLDTKLSIFETGIKVVDLLAPYRRGGKIGLFGGAGVGKTVLIMELINNIAKAHGGVSVFGGVGERTREGNDLYMEMKESGVINEKNIAESKVALVYGQMNEPPGARMRVGLTALTMAEYFRDVNEQDVLLFIDNIFRFVQAGSEVSALLGRMPSAVGYQPTLSTEMGSLQERITSTKEGSITSIQAVYVPADDLTDPAPATTFAHLDATTVLSRVLAAKGIYPAVDPLDSTSTMLQPRIVGEEHYETAQRVKQTSQRYKELQDIIAILGLDELSEEDRLTVARARKIERFLSQPFFVAEVFTGSPGKYVGLAETIRGFQLILSGELDGLPEQAFYLVGNIDEATAKAMNLEVESKLKK</sequence>
<gene>
    <name evidence="1" type="primary">atpB</name>
</gene>
<accession>Q7HHY5</accession>
<organism>
    <name type="scientific">Hyphaene coriacea</name>
    <name type="common">Ilala palm</name>
    <dbReference type="NCBI Taxonomy" id="145693"/>
    <lineage>
        <taxon>Eukaryota</taxon>
        <taxon>Viridiplantae</taxon>
        <taxon>Streptophyta</taxon>
        <taxon>Embryophyta</taxon>
        <taxon>Tracheophyta</taxon>
        <taxon>Spermatophyta</taxon>
        <taxon>Magnoliopsida</taxon>
        <taxon>Liliopsida</taxon>
        <taxon>Arecaceae</taxon>
        <taxon>Coryphoideae</taxon>
        <taxon>Borasseae</taxon>
        <taxon>Hyphaeninae</taxon>
        <taxon>Hyphaene</taxon>
    </lineage>
</organism>
<reference key="1">
    <citation type="journal article" date="2002" name="Syst. Biol.">
        <title>A molecular phylogenetic study of the Palmae (Arecaceae) based on atpB, rbcL, and 18S nrDNA sequences.</title>
        <authorList>
            <person name="Hahn W.J."/>
        </authorList>
    </citation>
    <scope>NUCLEOTIDE SEQUENCE [GENOMIC DNA]</scope>
</reference>
<protein>
    <recommendedName>
        <fullName evidence="1">ATP synthase subunit beta, chloroplastic</fullName>
        <ecNumber evidence="1">7.1.2.2</ecNumber>
    </recommendedName>
    <alternativeName>
        <fullName evidence="1">ATP synthase F1 sector subunit beta</fullName>
    </alternativeName>
    <alternativeName>
        <fullName evidence="1">F-ATPase subunit beta</fullName>
    </alternativeName>
</protein>
<proteinExistence type="inferred from homology"/>
<evidence type="ECO:0000255" key="1">
    <source>
        <dbReference type="HAMAP-Rule" id="MF_01347"/>
    </source>
</evidence>
<keyword id="KW-0066">ATP synthesis</keyword>
<keyword id="KW-0067">ATP-binding</keyword>
<keyword id="KW-0139">CF(1)</keyword>
<keyword id="KW-0150">Chloroplast</keyword>
<keyword id="KW-0375">Hydrogen ion transport</keyword>
<keyword id="KW-0406">Ion transport</keyword>
<keyword id="KW-0472">Membrane</keyword>
<keyword id="KW-0547">Nucleotide-binding</keyword>
<keyword id="KW-0934">Plastid</keyword>
<keyword id="KW-0793">Thylakoid</keyword>
<keyword id="KW-1278">Translocase</keyword>
<keyword id="KW-0813">Transport</keyword>
<geneLocation type="chloroplast"/>
<dbReference type="EC" id="7.1.2.2" evidence="1"/>
<dbReference type="EMBL" id="AY012413">
    <property type="protein sequence ID" value="AAK14668.1"/>
    <property type="molecule type" value="Genomic_DNA"/>
</dbReference>
<dbReference type="SMR" id="Q7HHY5"/>
<dbReference type="GO" id="GO:0009535">
    <property type="term" value="C:chloroplast thylakoid membrane"/>
    <property type="evidence" value="ECO:0007669"/>
    <property type="project" value="UniProtKB-SubCell"/>
</dbReference>
<dbReference type="GO" id="GO:0005739">
    <property type="term" value="C:mitochondrion"/>
    <property type="evidence" value="ECO:0007669"/>
    <property type="project" value="GOC"/>
</dbReference>
<dbReference type="GO" id="GO:0045259">
    <property type="term" value="C:proton-transporting ATP synthase complex"/>
    <property type="evidence" value="ECO:0007669"/>
    <property type="project" value="UniProtKB-KW"/>
</dbReference>
<dbReference type="GO" id="GO:0005524">
    <property type="term" value="F:ATP binding"/>
    <property type="evidence" value="ECO:0007669"/>
    <property type="project" value="UniProtKB-UniRule"/>
</dbReference>
<dbReference type="GO" id="GO:0016887">
    <property type="term" value="F:ATP hydrolysis activity"/>
    <property type="evidence" value="ECO:0007669"/>
    <property type="project" value="InterPro"/>
</dbReference>
<dbReference type="GO" id="GO:0046933">
    <property type="term" value="F:proton-transporting ATP synthase activity, rotational mechanism"/>
    <property type="evidence" value="ECO:0007669"/>
    <property type="project" value="UniProtKB-UniRule"/>
</dbReference>
<dbReference type="GO" id="GO:0042776">
    <property type="term" value="P:proton motive force-driven mitochondrial ATP synthesis"/>
    <property type="evidence" value="ECO:0007669"/>
    <property type="project" value="TreeGrafter"/>
</dbReference>
<dbReference type="CDD" id="cd18110">
    <property type="entry name" value="ATP-synt_F1_beta_C"/>
    <property type="match status" value="1"/>
</dbReference>
<dbReference type="CDD" id="cd18115">
    <property type="entry name" value="ATP-synt_F1_beta_N"/>
    <property type="match status" value="1"/>
</dbReference>
<dbReference type="CDD" id="cd01133">
    <property type="entry name" value="F1-ATPase_beta_CD"/>
    <property type="match status" value="1"/>
</dbReference>
<dbReference type="FunFam" id="1.10.1140.10:FF:000001">
    <property type="entry name" value="ATP synthase subunit beta"/>
    <property type="match status" value="1"/>
</dbReference>
<dbReference type="FunFam" id="3.40.50.12240:FF:000006">
    <property type="entry name" value="ATP synthase subunit beta"/>
    <property type="match status" value="1"/>
</dbReference>
<dbReference type="FunFam" id="3.40.50.300:FF:000004">
    <property type="entry name" value="ATP synthase subunit beta"/>
    <property type="match status" value="1"/>
</dbReference>
<dbReference type="FunFam" id="2.40.10.170:FF:000002">
    <property type="entry name" value="ATP synthase subunit beta, chloroplastic"/>
    <property type="match status" value="1"/>
</dbReference>
<dbReference type="Gene3D" id="2.40.10.170">
    <property type="match status" value="1"/>
</dbReference>
<dbReference type="Gene3D" id="1.10.1140.10">
    <property type="entry name" value="Bovine Mitochondrial F1-atpase, Atp Synthase Beta Chain, Chain D, domain 3"/>
    <property type="match status" value="1"/>
</dbReference>
<dbReference type="Gene3D" id="3.40.50.300">
    <property type="entry name" value="P-loop containing nucleotide triphosphate hydrolases"/>
    <property type="match status" value="1"/>
</dbReference>
<dbReference type="HAMAP" id="MF_01347">
    <property type="entry name" value="ATP_synth_beta_bact"/>
    <property type="match status" value="1"/>
</dbReference>
<dbReference type="InterPro" id="IPR003593">
    <property type="entry name" value="AAA+_ATPase"/>
</dbReference>
<dbReference type="InterPro" id="IPR055190">
    <property type="entry name" value="ATP-synt_VA_C"/>
</dbReference>
<dbReference type="InterPro" id="IPR005722">
    <property type="entry name" value="ATP_synth_F1_bsu"/>
</dbReference>
<dbReference type="InterPro" id="IPR020003">
    <property type="entry name" value="ATPase_a/bsu_AS"/>
</dbReference>
<dbReference type="InterPro" id="IPR050053">
    <property type="entry name" value="ATPase_alpha/beta_chains"/>
</dbReference>
<dbReference type="InterPro" id="IPR004100">
    <property type="entry name" value="ATPase_F1/V1/A1_a/bsu_N"/>
</dbReference>
<dbReference type="InterPro" id="IPR036121">
    <property type="entry name" value="ATPase_F1/V1/A1_a/bsu_N_sf"/>
</dbReference>
<dbReference type="InterPro" id="IPR000194">
    <property type="entry name" value="ATPase_F1/V1/A1_a/bsu_nucl-bd"/>
</dbReference>
<dbReference type="InterPro" id="IPR024034">
    <property type="entry name" value="ATPase_F1/V1_b/a_C"/>
</dbReference>
<dbReference type="InterPro" id="IPR027417">
    <property type="entry name" value="P-loop_NTPase"/>
</dbReference>
<dbReference type="NCBIfam" id="TIGR01039">
    <property type="entry name" value="atpD"/>
    <property type="match status" value="1"/>
</dbReference>
<dbReference type="PANTHER" id="PTHR15184">
    <property type="entry name" value="ATP SYNTHASE"/>
    <property type="match status" value="1"/>
</dbReference>
<dbReference type="PANTHER" id="PTHR15184:SF71">
    <property type="entry name" value="ATP SYNTHASE SUBUNIT BETA, MITOCHONDRIAL"/>
    <property type="match status" value="1"/>
</dbReference>
<dbReference type="Pfam" id="PF00006">
    <property type="entry name" value="ATP-synt_ab"/>
    <property type="match status" value="1"/>
</dbReference>
<dbReference type="Pfam" id="PF02874">
    <property type="entry name" value="ATP-synt_ab_N"/>
    <property type="match status" value="1"/>
</dbReference>
<dbReference type="Pfam" id="PF22919">
    <property type="entry name" value="ATP-synt_VA_C"/>
    <property type="match status" value="1"/>
</dbReference>
<dbReference type="SMART" id="SM00382">
    <property type="entry name" value="AAA"/>
    <property type="match status" value="1"/>
</dbReference>
<dbReference type="SUPFAM" id="SSF47917">
    <property type="entry name" value="C-terminal domain of alpha and beta subunits of F1 ATP synthase"/>
    <property type="match status" value="1"/>
</dbReference>
<dbReference type="SUPFAM" id="SSF50615">
    <property type="entry name" value="N-terminal domain of alpha and beta subunits of F1 ATP synthase"/>
    <property type="match status" value="1"/>
</dbReference>
<dbReference type="SUPFAM" id="SSF52540">
    <property type="entry name" value="P-loop containing nucleoside triphosphate hydrolases"/>
    <property type="match status" value="1"/>
</dbReference>
<dbReference type="PROSITE" id="PS00152">
    <property type="entry name" value="ATPASE_ALPHA_BETA"/>
    <property type="match status" value="1"/>
</dbReference>